<reference key="1">
    <citation type="journal article" date="1997" name="Nature">
        <title>Molecular basis of symbiosis between Rhizobium and legumes.</title>
        <authorList>
            <person name="Freiberg C.A."/>
            <person name="Fellay R."/>
            <person name="Bairoch A."/>
            <person name="Broughton W.J."/>
            <person name="Rosenthal A."/>
            <person name="Perret X."/>
        </authorList>
    </citation>
    <scope>NUCLEOTIDE SEQUENCE [LARGE SCALE GENOMIC DNA]</scope>
    <source>
        <strain>NBRC 101917 / NGR234</strain>
    </source>
</reference>
<reference key="2">
    <citation type="journal article" date="2009" name="Appl. Environ. Microbiol.">
        <title>Rhizobium sp. strain NGR234 possesses a remarkable number of secretion systems.</title>
        <authorList>
            <person name="Schmeisser C."/>
            <person name="Liesegang H."/>
            <person name="Krysciak D."/>
            <person name="Bakkou N."/>
            <person name="Le Quere A."/>
            <person name="Wollherr A."/>
            <person name="Heinemeyer I."/>
            <person name="Morgenstern B."/>
            <person name="Pommerening-Roeser A."/>
            <person name="Flores M."/>
            <person name="Palacios R."/>
            <person name="Brenner S."/>
            <person name="Gottschalk G."/>
            <person name="Schmitz R.A."/>
            <person name="Broughton W.J."/>
            <person name="Perret X."/>
            <person name="Strittmatter A.W."/>
            <person name="Streit W.R."/>
        </authorList>
    </citation>
    <scope>NUCLEOTIDE SEQUENCE [LARGE SCALE GENOMIC DNA]</scope>
    <source>
        <strain>NBRC 101917 / NGR234</strain>
    </source>
</reference>
<evidence type="ECO:0000250" key="1"/>
<evidence type="ECO:0000305" key="2"/>
<gene>
    <name type="primary">noeK</name>
    <name type="ordered locus">NGR_a00390</name>
    <name type="ORF">y4aI</name>
</gene>
<keyword id="KW-0413">Isomerase</keyword>
<keyword id="KW-0460">Magnesium</keyword>
<keyword id="KW-0479">Metal-binding</keyword>
<keyword id="KW-0536">Nodulation</keyword>
<keyword id="KW-0597">Phosphoprotein</keyword>
<keyword id="KW-0614">Plasmid</keyword>
<keyword id="KW-1185">Reference proteome</keyword>
<proteinExistence type="inferred from homology"/>
<name>NOEK_SINFN</name>
<protein>
    <recommendedName>
        <fullName>Phosphomannomutase</fullName>
        <shortName>PMM</shortName>
        <ecNumber>5.4.2.8</ecNumber>
    </recommendedName>
</protein>
<dbReference type="EC" id="5.4.2.8"/>
<dbReference type="EMBL" id="U00090">
    <property type="protein sequence ID" value="AAB91606.1"/>
    <property type="molecule type" value="Genomic_DNA"/>
</dbReference>
<dbReference type="RefSeq" id="NP_443768.1">
    <property type="nucleotide sequence ID" value="NC_000914.2"/>
</dbReference>
<dbReference type="RefSeq" id="WP_010875081.1">
    <property type="nucleotide sequence ID" value="NC_000914.2"/>
</dbReference>
<dbReference type="SMR" id="P55356"/>
<dbReference type="KEGG" id="rhi:NGR_a00390"/>
<dbReference type="PATRIC" id="fig|394.7.peg.37"/>
<dbReference type="eggNOG" id="COG1109">
    <property type="taxonomic scope" value="Bacteria"/>
</dbReference>
<dbReference type="HOGENOM" id="CLU_045514_1_0_5"/>
<dbReference type="OrthoDB" id="9803322at2"/>
<dbReference type="PRO" id="PR:P55356"/>
<dbReference type="Proteomes" id="UP000001054">
    <property type="component" value="Plasmid pNGR234a"/>
</dbReference>
<dbReference type="GO" id="GO:0000287">
    <property type="term" value="F:magnesium ion binding"/>
    <property type="evidence" value="ECO:0007669"/>
    <property type="project" value="InterPro"/>
</dbReference>
<dbReference type="GO" id="GO:0004615">
    <property type="term" value="F:phosphomannomutase activity"/>
    <property type="evidence" value="ECO:0007669"/>
    <property type="project" value="UniProtKB-EC"/>
</dbReference>
<dbReference type="GO" id="GO:0005975">
    <property type="term" value="P:carbohydrate metabolic process"/>
    <property type="evidence" value="ECO:0007669"/>
    <property type="project" value="InterPro"/>
</dbReference>
<dbReference type="CDD" id="cd03088">
    <property type="entry name" value="ManB"/>
    <property type="match status" value="1"/>
</dbReference>
<dbReference type="Gene3D" id="3.40.120.10">
    <property type="entry name" value="Alpha-D-Glucose-1,6-Bisphosphate, subunit A, domain 3"/>
    <property type="match status" value="3"/>
</dbReference>
<dbReference type="Gene3D" id="3.30.310.50">
    <property type="entry name" value="Alpha-D-phosphohexomutase, C-terminal domain"/>
    <property type="match status" value="1"/>
</dbReference>
<dbReference type="InterPro" id="IPR005844">
    <property type="entry name" value="A-D-PHexomutase_a/b/a-I"/>
</dbReference>
<dbReference type="InterPro" id="IPR016055">
    <property type="entry name" value="A-D-PHexomutase_a/b/a-I/II/III"/>
</dbReference>
<dbReference type="InterPro" id="IPR005845">
    <property type="entry name" value="A-D-PHexomutase_a/b/a-II"/>
</dbReference>
<dbReference type="InterPro" id="IPR005846">
    <property type="entry name" value="A-D-PHexomutase_a/b/a-III"/>
</dbReference>
<dbReference type="InterPro" id="IPR005843">
    <property type="entry name" value="A-D-PHexomutase_C"/>
</dbReference>
<dbReference type="InterPro" id="IPR036900">
    <property type="entry name" value="A-D-PHexomutase_C_sf"/>
</dbReference>
<dbReference type="InterPro" id="IPR016066">
    <property type="entry name" value="A-D-PHexomutase_CS"/>
</dbReference>
<dbReference type="InterPro" id="IPR050060">
    <property type="entry name" value="Phosphoglucosamine_mutase"/>
</dbReference>
<dbReference type="PANTHER" id="PTHR42946:SF1">
    <property type="entry name" value="PHOSPHOGLUCOMUTASE (ALPHA-D-GLUCOSE-1,6-BISPHOSPHATE-DEPENDENT)"/>
    <property type="match status" value="1"/>
</dbReference>
<dbReference type="PANTHER" id="PTHR42946">
    <property type="entry name" value="PHOSPHOHEXOSE MUTASE"/>
    <property type="match status" value="1"/>
</dbReference>
<dbReference type="Pfam" id="PF02878">
    <property type="entry name" value="PGM_PMM_I"/>
    <property type="match status" value="1"/>
</dbReference>
<dbReference type="Pfam" id="PF02879">
    <property type="entry name" value="PGM_PMM_II"/>
    <property type="match status" value="1"/>
</dbReference>
<dbReference type="Pfam" id="PF02880">
    <property type="entry name" value="PGM_PMM_III"/>
    <property type="match status" value="1"/>
</dbReference>
<dbReference type="Pfam" id="PF00408">
    <property type="entry name" value="PGM_PMM_IV"/>
    <property type="match status" value="1"/>
</dbReference>
<dbReference type="SUPFAM" id="SSF55957">
    <property type="entry name" value="Phosphoglucomutase, C-terminal domain"/>
    <property type="match status" value="1"/>
</dbReference>
<dbReference type="SUPFAM" id="SSF53738">
    <property type="entry name" value="Phosphoglucomutase, first 3 domains"/>
    <property type="match status" value="3"/>
</dbReference>
<dbReference type="PROSITE" id="PS00710">
    <property type="entry name" value="PGM_PMM"/>
    <property type="match status" value="1"/>
</dbReference>
<organism>
    <name type="scientific">Sinorhizobium fredii (strain NBRC 101917 / NGR234)</name>
    <dbReference type="NCBI Taxonomy" id="394"/>
    <lineage>
        <taxon>Bacteria</taxon>
        <taxon>Pseudomonadati</taxon>
        <taxon>Pseudomonadota</taxon>
        <taxon>Alphaproteobacteria</taxon>
        <taxon>Hyphomicrobiales</taxon>
        <taxon>Rhizobiaceae</taxon>
        <taxon>Sinorhizobium/Ensifer group</taxon>
        <taxon>Sinorhizobium</taxon>
    </lineage>
</organism>
<accession>P55356</accession>
<comment type="catalytic activity">
    <reaction>
        <text>alpha-D-mannose 1-phosphate = D-mannose 6-phosphate</text>
        <dbReference type="Rhea" id="RHEA:11140"/>
        <dbReference type="ChEBI" id="CHEBI:58409"/>
        <dbReference type="ChEBI" id="CHEBI:58735"/>
        <dbReference type="EC" id="5.4.2.8"/>
    </reaction>
</comment>
<comment type="cofactor">
    <cofactor evidence="1">
        <name>Mg(2+)</name>
        <dbReference type="ChEBI" id="CHEBI:18420"/>
    </cofactor>
    <text evidence="1">Binds 1 Mg(2+) ion per subunit.</text>
</comment>
<comment type="similarity">
    <text evidence="2">Belongs to the phosphohexose mutase family.</text>
</comment>
<geneLocation type="plasmid">
    <name>sym pNGR234a</name>
</geneLocation>
<feature type="chain" id="PRO_0000147833" description="Phosphomannomutase">
    <location>
        <begin position="1"/>
        <end position="474"/>
    </location>
</feature>
<feature type="active site" description="Phosphoserine intermediate" evidence="1">
    <location>
        <position position="101"/>
    </location>
</feature>
<feature type="binding site" description="via phosphate group" evidence="1">
    <location>
        <position position="101"/>
    </location>
    <ligand>
        <name>Mg(2+)</name>
        <dbReference type="ChEBI" id="CHEBI:18420"/>
    </ligand>
</feature>
<feature type="binding site" evidence="1">
    <location>
        <position position="242"/>
    </location>
    <ligand>
        <name>Mg(2+)</name>
        <dbReference type="ChEBI" id="CHEBI:18420"/>
    </ligand>
</feature>
<feature type="binding site" evidence="1">
    <location>
        <position position="244"/>
    </location>
    <ligand>
        <name>Mg(2+)</name>
        <dbReference type="ChEBI" id="CHEBI:18420"/>
    </ligand>
</feature>
<feature type="binding site" evidence="1">
    <location>
        <position position="246"/>
    </location>
    <ligand>
        <name>Mg(2+)</name>
        <dbReference type="ChEBI" id="CHEBI:18420"/>
    </ligand>
</feature>
<sequence length="474" mass="49671">MGPKFGTSGLRGLATELVGSVSALYATAFSRMLLDRGRVAPGATVLVGRDFRDSSSEIAAICMAALARAGMVPVDCGGLPTPALALYGRKLGAASLMITGSHIPADRNGIKFYLPDGEINKADEQAITALAEQLSADADATRVECGRGADHSSEATDFYIQRYETLLPKSGLKGLKIGLYQHSSVARDILTTILEGHGANVVPVGRSEVFIPVDTEAISAATCKMLAAWAKEFAFDAIVSSDADADRPLLTDETGTPLRGDLLGLICARLLEAKLIATPITSNSGIEAASGVEVVRTRVGSPYVIAAMTEAVARGKQRVMGFEANGGVMLGSNFSFGGASLPALPTRDCVLPIIAALHMAVEAKTPLSGIVAMHRLPVALSGRIENYPFDRSDALVAFLKASKANVSHLFSRIGRVAGTDDVDGLRLTFEGGRILHIRPSGNAPELRCYVEADDPDAAEHLLAQGLAVLNSSMV</sequence>